<name>NADC_ARATH</name>
<protein>
    <recommendedName>
        <fullName evidence="5">Nicotinate-nucleotide pyrophosphorylase [carboxylating], chloroplastic</fullName>
        <ecNumber evidence="3">2.4.2.19</ecNumber>
    </recommendedName>
    <alternativeName>
        <fullName evidence="4">Quinolinate phosphoribosyltransferase [decarboxylating]</fullName>
    </alternativeName>
</protein>
<evidence type="ECO:0000250" key="1">
    <source>
        <dbReference type="UniProtKB" id="P9WJJ7"/>
    </source>
</evidence>
<evidence type="ECO:0000255" key="2"/>
<evidence type="ECO:0000269" key="3">
    <source>
    </source>
</evidence>
<evidence type="ECO:0000303" key="4">
    <source>
    </source>
</evidence>
<evidence type="ECO:0000305" key="5"/>
<evidence type="ECO:0000305" key="6">
    <source>
    </source>
</evidence>
<evidence type="ECO:0000312" key="7">
    <source>
        <dbReference type="Araport" id="AT2G01350"/>
    </source>
</evidence>
<evidence type="ECO:0000312" key="8">
    <source>
        <dbReference type="EMBL" id="AAD14535.2"/>
    </source>
</evidence>
<dbReference type="EC" id="2.4.2.19" evidence="3"/>
<dbReference type="EMBL" id="AC006200">
    <property type="protein sequence ID" value="AAD14535.2"/>
    <property type="molecule type" value="Genomic_DNA"/>
</dbReference>
<dbReference type="EMBL" id="CP002685">
    <property type="protein sequence ID" value="AEC05440.1"/>
    <property type="molecule type" value="Genomic_DNA"/>
</dbReference>
<dbReference type="EMBL" id="AK117875">
    <property type="protein sequence ID" value="BAC42515.1"/>
    <property type="molecule type" value="mRNA"/>
</dbReference>
<dbReference type="EMBL" id="AY057685">
    <property type="protein sequence ID" value="AAL15316.1"/>
    <property type="molecule type" value="mRNA"/>
</dbReference>
<dbReference type="EMBL" id="AY116955">
    <property type="protein sequence ID" value="AAM51589.1"/>
    <property type="molecule type" value="mRNA"/>
</dbReference>
<dbReference type="EMBL" id="AY086867">
    <property type="protein sequence ID" value="AAM63914.1"/>
    <property type="status" value="ALT_INIT"/>
    <property type="molecule type" value="mRNA"/>
</dbReference>
<dbReference type="PIR" id="F84423">
    <property type="entry name" value="F84423"/>
</dbReference>
<dbReference type="RefSeq" id="NP_565259.1">
    <molecule id="Q9ZU32-1"/>
    <property type="nucleotide sequence ID" value="NM_126196.3"/>
</dbReference>
<dbReference type="SMR" id="Q9ZU32"/>
<dbReference type="BioGRID" id="67">
    <property type="interactions" value="3"/>
</dbReference>
<dbReference type="FunCoup" id="Q9ZU32">
    <property type="interactions" value="1117"/>
</dbReference>
<dbReference type="STRING" id="3702.Q9ZU32"/>
<dbReference type="PaxDb" id="3702-AT2G01350.1"/>
<dbReference type="ProteomicsDB" id="251197">
    <molecule id="Q9ZU32-1"/>
</dbReference>
<dbReference type="EnsemblPlants" id="AT2G01350.1">
    <molecule id="Q9ZU32-1"/>
    <property type="protein sequence ID" value="AT2G01350.1"/>
    <property type="gene ID" value="AT2G01350"/>
</dbReference>
<dbReference type="GeneID" id="814663"/>
<dbReference type="Gramene" id="AT2G01350.1">
    <molecule id="Q9ZU32-1"/>
    <property type="protein sequence ID" value="AT2G01350.1"/>
    <property type="gene ID" value="AT2G01350"/>
</dbReference>
<dbReference type="KEGG" id="ath:AT2G01350"/>
<dbReference type="Araport" id="AT2G01350"/>
<dbReference type="TAIR" id="AT2G01350">
    <property type="gene designation" value="QPT"/>
</dbReference>
<dbReference type="eggNOG" id="KOG3008">
    <property type="taxonomic scope" value="Eukaryota"/>
</dbReference>
<dbReference type="InParanoid" id="Q9ZU32"/>
<dbReference type="OrthoDB" id="10067394at2759"/>
<dbReference type="PhylomeDB" id="Q9ZU32"/>
<dbReference type="BioCyc" id="ARA:AT2G01350-MONOMER"/>
<dbReference type="UniPathway" id="UPA00253">
    <property type="reaction ID" value="UER00331"/>
</dbReference>
<dbReference type="PRO" id="PR:Q9ZU32"/>
<dbReference type="Proteomes" id="UP000006548">
    <property type="component" value="Chromosome 2"/>
</dbReference>
<dbReference type="ExpressionAtlas" id="Q9ZU32">
    <property type="expression patterns" value="baseline and differential"/>
</dbReference>
<dbReference type="GO" id="GO:0009507">
    <property type="term" value="C:chloroplast"/>
    <property type="evidence" value="ECO:0000314"/>
    <property type="project" value="TAIR"/>
</dbReference>
<dbReference type="GO" id="GO:0004514">
    <property type="term" value="F:nicotinate-nucleotide diphosphorylase (carboxylating) activity"/>
    <property type="evidence" value="ECO:0000315"/>
    <property type="project" value="TAIR"/>
</dbReference>
<dbReference type="GO" id="GO:0009435">
    <property type="term" value="P:NAD biosynthetic process"/>
    <property type="evidence" value="ECO:0000315"/>
    <property type="project" value="TAIR"/>
</dbReference>
<dbReference type="CDD" id="cd01572">
    <property type="entry name" value="QPRTase"/>
    <property type="match status" value="1"/>
</dbReference>
<dbReference type="FunFam" id="3.90.1170.20:FF:000001">
    <property type="entry name" value="Nicotinate-nucleotide diphosphorylase (Carboxylating)"/>
    <property type="match status" value="1"/>
</dbReference>
<dbReference type="FunFam" id="3.20.20.70:FF:000149">
    <property type="entry name" value="Nicotinate-nucleotide pyrophosphorylase [carboxylating]"/>
    <property type="match status" value="1"/>
</dbReference>
<dbReference type="Gene3D" id="3.20.20.70">
    <property type="entry name" value="Aldolase class I"/>
    <property type="match status" value="1"/>
</dbReference>
<dbReference type="Gene3D" id="3.90.1170.20">
    <property type="entry name" value="Quinolinate phosphoribosyl transferase, N-terminal domain"/>
    <property type="match status" value="1"/>
</dbReference>
<dbReference type="InterPro" id="IPR013785">
    <property type="entry name" value="Aldolase_TIM"/>
</dbReference>
<dbReference type="InterPro" id="IPR004393">
    <property type="entry name" value="NadC"/>
</dbReference>
<dbReference type="InterPro" id="IPR027277">
    <property type="entry name" value="NadC/ModD"/>
</dbReference>
<dbReference type="InterPro" id="IPR036068">
    <property type="entry name" value="Nicotinate_pribotase-like_C"/>
</dbReference>
<dbReference type="InterPro" id="IPR037128">
    <property type="entry name" value="Quinolinate_PRibosylTase_N_sf"/>
</dbReference>
<dbReference type="InterPro" id="IPR002638">
    <property type="entry name" value="Quinolinate_PRibosylTrfase_C"/>
</dbReference>
<dbReference type="InterPro" id="IPR022412">
    <property type="entry name" value="Quinolinate_PRibosylTrfase_N"/>
</dbReference>
<dbReference type="NCBIfam" id="TIGR00078">
    <property type="entry name" value="nadC"/>
    <property type="match status" value="1"/>
</dbReference>
<dbReference type="PANTHER" id="PTHR32179">
    <property type="entry name" value="NICOTINATE-NUCLEOTIDE PYROPHOSPHORYLASE [CARBOXYLATING]"/>
    <property type="match status" value="1"/>
</dbReference>
<dbReference type="PANTHER" id="PTHR32179:SF3">
    <property type="entry name" value="NICOTINATE-NUCLEOTIDE PYROPHOSPHORYLASE [CARBOXYLATING]"/>
    <property type="match status" value="1"/>
</dbReference>
<dbReference type="Pfam" id="PF01729">
    <property type="entry name" value="QRPTase_C"/>
    <property type="match status" value="1"/>
</dbReference>
<dbReference type="Pfam" id="PF02749">
    <property type="entry name" value="QRPTase_N"/>
    <property type="match status" value="1"/>
</dbReference>
<dbReference type="SUPFAM" id="SSF51690">
    <property type="entry name" value="Nicotinate/Quinolinate PRTase C-terminal domain-like"/>
    <property type="match status" value="1"/>
</dbReference>
<dbReference type="SUPFAM" id="SSF54675">
    <property type="entry name" value="Nicotinate/Quinolinate PRTase N-terminal domain-like"/>
    <property type="match status" value="1"/>
</dbReference>
<reference key="1">
    <citation type="journal article" date="1999" name="Nature">
        <title>Sequence and analysis of chromosome 2 of the plant Arabidopsis thaliana.</title>
        <authorList>
            <person name="Lin X."/>
            <person name="Kaul S."/>
            <person name="Rounsley S.D."/>
            <person name="Shea T.P."/>
            <person name="Benito M.-I."/>
            <person name="Town C.D."/>
            <person name="Fujii C.Y."/>
            <person name="Mason T.M."/>
            <person name="Bowman C.L."/>
            <person name="Barnstead M.E."/>
            <person name="Feldblyum T.V."/>
            <person name="Buell C.R."/>
            <person name="Ketchum K.A."/>
            <person name="Lee J.J."/>
            <person name="Ronning C.M."/>
            <person name="Koo H.L."/>
            <person name="Moffat K.S."/>
            <person name="Cronin L.A."/>
            <person name="Shen M."/>
            <person name="Pai G."/>
            <person name="Van Aken S."/>
            <person name="Umayam L."/>
            <person name="Tallon L.J."/>
            <person name="Gill J.E."/>
            <person name="Adams M.D."/>
            <person name="Carrera A.J."/>
            <person name="Creasy T.H."/>
            <person name="Goodman H.M."/>
            <person name="Somerville C.R."/>
            <person name="Copenhaver G.P."/>
            <person name="Preuss D."/>
            <person name="Nierman W.C."/>
            <person name="White O."/>
            <person name="Eisen J.A."/>
            <person name="Salzberg S.L."/>
            <person name="Fraser C.M."/>
            <person name="Venter J.C."/>
        </authorList>
    </citation>
    <scope>NUCLEOTIDE SEQUENCE [LARGE SCALE GENOMIC DNA]</scope>
    <source>
        <strain>cv. Columbia</strain>
    </source>
</reference>
<reference key="2">
    <citation type="journal article" date="2017" name="Plant J.">
        <title>Araport11: a complete reannotation of the Arabidopsis thaliana reference genome.</title>
        <authorList>
            <person name="Cheng C.Y."/>
            <person name="Krishnakumar V."/>
            <person name="Chan A.P."/>
            <person name="Thibaud-Nissen F."/>
            <person name="Schobel S."/>
            <person name="Town C.D."/>
        </authorList>
    </citation>
    <scope>GENOME REANNOTATION</scope>
    <source>
        <strain>cv. Columbia</strain>
    </source>
</reference>
<reference key="3">
    <citation type="journal article" date="2002" name="Science">
        <title>Functional annotation of a full-length Arabidopsis cDNA collection.</title>
        <authorList>
            <person name="Seki M."/>
            <person name="Narusaka M."/>
            <person name="Kamiya A."/>
            <person name="Ishida J."/>
            <person name="Satou M."/>
            <person name="Sakurai T."/>
            <person name="Nakajima M."/>
            <person name="Enju A."/>
            <person name="Akiyama K."/>
            <person name="Oono Y."/>
            <person name="Muramatsu M."/>
            <person name="Hayashizaki Y."/>
            <person name="Kawai J."/>
            <person name="Carninci P."/>
            <person name="Itoh M."/>
            <person name="Ishii Y."/>
            <person name="Arakawa T."/>
            <person name="Shibata K."/>
            <person name="Shinagawa A."/>
            <person name="Shinozaki K."/>
        </authorList>
    </citation>
    <scope>NUCLEOTIDE SEQUENCE [LARGE SCALE MRNA]</scope>
    <source>
        <strain>cv. Columbia</strain>
    </source>
</reference>
<reference key="4">
    <citation type="journal article" date="2003" name="Science">
        <title>Empirical analysis of transcriptional activity in the Arabidopsis genome.</title>
        <authorList>
            <person name="Yamada K."/>
            <person name="Lim J."/>
            <person name="Dale J.M."/>
            <person name="Chen H."/>
            <person name="Shinn P."/>
            <person name="Palm C.J."/>
            <person name="Southwick A.M."/>
            <person name="Wu H.C."/>
            <person name="Kim C.J."/>
            <person name="Nguyen M."/>
            <person name="Pham P.K."/>
            <person name="Cheuk R.F."/>
            <person name="Karlin-Newmann G."/>
            <person name="Liu S.X."/>
            <person name="Lam B."/>
            <person name="Sakano H."/>
            <person name="Wu T."/>
            <person name="Yu G."/>
            <person name="Miranda M."/>
            <person name="Quach H.L."/>
            <person name="Tripp M."/>
            <person name="Chang C.H."/>
            <person name="Lee J.M."/>
            <person name="Toriumi M.J."/>
            <person name="Chan M.M."/>
            <person name="Tang C.C."/>
            <person name="Onodera C.S."/>
            <person name="Deng J.M."/>
            <person name="Akiyama K."/>
            <person name="Ansari Y."/>
            <person name="Arakawa T."/>
            <person name="Banh J."/>
            <person name="Banno F."/>
            <person name="Bowser L."/>
            <person name="Brooks S.Y."/>
            <person name="Carninci P."/>
            <person name="Chao Q."/>
            <person name="Choy N."/>
            <person name="Enju A."/>
            <person name="Goldsmith A.D."/>
            <person name="Gurjal M."/>
            <person name="Hansen N.F."/>
            <person name="Hayashizaki Y."/>
            <person name="Johnson-Hopson C."/>
            <person name="Hsuan V.W."/>
            <person name="Iida K."/>
            <person name="Karnes M."/>
            <person name="Khan S."/>
            <person name="Koesema E."/>
            <person name="Ishida J."/>
            <person name="Jiang P.X."/>
            <person name="Jones T."/>
            <person name="Kawai J."/>
            <person name="Kamiya A."/>
            <person name="Meyers C."/>
            <person name="Nakajima M."/>
            <person name="Narusaka M."/>
            <person name="Seki M."/>
            <person name="Sakurai T."/>
            <person name="Satou M."/>
            <person name="Tamse R."/>
            <person name="Vaysberg M."/>
            <person name="Wallender E.K."/>
            <person name="Wong C."/>
            <person name="Yamamura Y."/>
            <person name="Yuan S."/>
            <person name="Shinozaki K."/>
            <person name="Davis R.W."/>
            <person name="Theologis A."/>
            <person name="Ecker J.R."/>
        </authorList>
    </citation>
    <scope>NUCLEOTIDE SEQUENCE [LARGE SCALE MRNA]</scope>
    <source>
        <strain>cv. Columbia</strain>
    </source>
</reference>
<reference key="5">
    <citation type="submission" date="2002-03" db="EMBL/GenBank/DDBJ databases">
        <title>Full-length cDNA from Arabidopsis thaliana.</title>
        <authorList>
            <person name="Brover V.V."/>
            <person name="Troukhan M.E."/>
            <person name="Alexandrov N.A."/>
            <person name="Lu Y.-P."/>
            <person name="Flavell R.B."/>
            <person name="Feldmann K.A."/>
        </authorList>
    </citation>
    <scope>NUCLEOTIDE SEQUENCE [LARGE SCALE MRNA]</scope>
</reference>
<reference key="6">
    <citation type="journal article" date="2006" name="Plant Physiol.">
        <title>Early steps in the biosynthesis of NAD in Arabidopsis start with aspartate and occur in the plastid.</title>
        <authorList>
            <person name="Katoh A."/>
            <person name="Uenohara K."/>
            <person name="Akita M."/>
            <person name="Hashimoto T."/>
        </authorList>
    </citation>
    <scope>FUNCTION</scope>
    <scope>CATALYTIC ACTIVITY</scope>
    <scope>SUBCELLULAR LOCATION</scope>
    <scope>DISRUPTION PHENOTYPE</scope>
</reference>
<reference key="7">
    <citation type="journal article" date="2012" name="Plant J.">
        <title>Inducible NAD overproduction in Arabidopsis alters metabolic pools and gene expression correlated with increased salicylate content and resistance to Pst-AvrRpm1.</title>
        <authorList>
            <person name="Petriacq P."/>
            <person name="de Bont L."/>
            <person name="Hager J."/>
            <person name="Didierlaurent L."/>
            <person name="Mauve C."/>
            <person name="Guerard F."/>
            <person name="Noctor G."/>
            <person name="Pelletier S."/>
            <person name="Renou J.P."/>
            <person name="Tcherkez G."/>
            <person name="Gakiere B."/>
        </authorList>
    </citation>
    <scope>FUNCTION</scope>
</reference>
<gene>
    <name evidence="4" type="primary">QPT</name>
    <name evidence="7" type="ordered locus">At2g01350</name>
    <name evidence="8" type="ORF">F10A8.23</name>
</gene>
<feature type="transit peptide" description="Chloroplast" evidence="2">
    <location>
        <begin position="1"/>
        <end position="41"/>
    </location>
</feature>
<feature type="chain" id="PRO_0000423480" description="Nicotinate-nucleotide pyrophosphorylase [carboxylating], chloroplastic">
    <location>
        <begin position="42"/>
        <end position="348"/>
    </location>
</feature>
<feature type="binding site" evidence="1">
    <location>
        <position position="139"/>
    </location>
    <ligand>
        <name>substrate</name>
    </ligand>
</feature>
<feature type="binding site" evidence="1">
    <location>
        <begin position="170"/>
        <end position="172"/>
    </location>
    <ligand>
        <name>substrate</name>
    </ligand>
</feature>
<feature type="binding site" evidence="1">
    <location>
        <position position="194"/>
    </location>
    <ligand>
        <name>substrate</name>
    </ligand>
</feature>
<feature type="binding site" evidence="1">
    <location>
        <position position="204"/>
    </location>
    <ligand>
        <name>substrate</name>
    </ligand>
</feature>
<feature type="binding site" evidence="1">
    <location>
        <position position="237"/>
    </location>
    <ligand>
        <name>substrate</name>
    </ligand>
</feature>
<feature type="binding site" evidence="1">
    <location>
        <position position="264"/>
    </location>
    <ligand>
        <name>substrate</name>
    </ligand>
</feature>
<feature type="binding site" evidence="1">
    <location>
        <begin position="296"/>
        <end position="298"/>
    </location>
    <ligand>
        <name>substrate</name>
    </ligand>
</feature>
<feature type="binding site" evidence="1">
    <location>
        <begin position="317"/>
        <end position="319"/>
    </location>
    <ligand>
        <name>substrate</name>
    </ligand>
</feature>
<feature type="sequence conflict" description="In Ref. 5; AAM63914." evidence="5" ref="5">
    <original>A</original>
    <variation>D</variation>
    <location>
        <position position="56"/>
    </location>
</feature>
<comment type="function">
    <text evidence="3">Involved in the biosynthesis of NAD(+) (PubMed:16698895). Catalyzes the conversion of quinolate to nicotinate to nicotinate beta-D-ribonucleotide (PubMed:16698895).</text>
</comment>
<comment type="catalytic activity">
    <reaction evidence="3">
        <text>nicotinate beta-D-ribonucleotide + CO2 + diphosphate = quinolinate + 5-phospho-alpha-D-ribose 1-diphosphate + 2 H(+)</text>
        <dbReference type="Rhea" id="RHEA:12733"/>
        <dbReference type="ChEBI" id="CHEBI:15378"/>
        <dbReference type="ChEBI" id="CHEBI:16526"/>
        <dbReference type="ChEBI" id="CHEBI:29959"/>
        <dbReference type="ChEBI" id="CHEBI:33019"/>
        <dbReference type="ChEBI" id="CHEBI:57502"/>
        <dbReference type="ChEBI" id="CHEBI:58017"/>
        <dbReference type="EC" id="2.4.2.19"/>
    </reaction>
    <physiologicalReaction direction="right-to-left" evidence="3">
        <dbReference type="Rhea" id="RHEA:12735"/>
    </physiologicalReaction>
</comment>
<comment type="pathway">
    <text evidence="5">Cofactor biosynthesis; NAD(+) biosynthesis; nicotinate D-ribonucleotide from quinolinate: step 1/1.</text>
</comment>
<comment type="subcellular location">
    <subcellularLocation>
        <location evidence="3">Plastid</location>
        <location evidence="3">Chloroplast</location>
    </subcellularLocation>
</comment>
<comment type="alternative products">
    <event type="alternative splicing"/>
    <isoform>
        <id>Q9ZU32-1</id>
        <name>1</name>
        <sequence type="displayed"/>
    </isoform>
    <text>A number of isoforms are produced. According to EST sequences.</text>
</comment>
<comment type="disruption phenotype">
    <text evidence="3">Embryonic lethality when homozygous.</text>
</comment>
<comment type="miscellaneous">
    <text evidence="6">Accumulation of NAD by over-expression of the bacterial nadC gene in Arabidopsis stimulates plant resistance probably via salicylic acid (SA)-dependent signaling.</text>
</comment>
<comment type="similarity">
    <text evidence="5">Belongs to the NadC/ModD family.</text>
</comment>
<comment type="sequence caution" evidence="5">
    <conflict type="erroneous initiation">
        <sequence resource="EMBL-CDS" id="AAM63914"/>
    </conflict>
    <text>Truncated N-terminus.</text>
</comment>
<keyword id="KW-0025">Alternative splicing</keyword>
<keyword id="KW-0150">Chloroplast</keyword>
<keyword id="KW-0328">Glycosyltransferase</keyword>
<keyword id="KW-0934">Plastid</keyword>
<keyword id="KW-0662">Pyridine nucleotide biosynthesis</keyword>
<keyword id="KW-1185">Reference proteome</keyword>
<keyword id="KW-0808">Transferase</keyword>
<keyword id="KW-0809">Transit peptide</keyword>
<accession>Q9ZU32</accession>
<accession>Q8LC11</accession>
<accession>Q93ZA4</accession>
<sequence>MISVSRFLSPQFYAIPRSFVKMSASATQTAGEVSMGIKPPSHPTYDLKAVIKLALAEDAGHTGDVTCMATIPFDMEVEAYFLAKEDGIVAGVALADMIFEHVDPSLKVEWMRKDGDYVHKGLKFGKVSGNAHKIVVAERVLLNFMQRMSGIATLTKLMADAASPACILETRKTAPGLRLVDKWAVLIGGGRNHRMGLFDMVMIKDNHISAAGGIVNAVKSVDEYLKQKNLEMDVEVETRTLEEVKEVLEYASGSETRLTRIMLDNMVVPLENGDVDVTMLKDAVELINGRFETEASGNVTLETVHKIGQSGVTFISSGALTHSVKALDISLKIDTELALEVGRRTKRA</sequence>
<organism>
    <name type="scientific">Arabidopsis thaliana</name>
    <name type="common">Mouse-ear cress</name>
    <dbReference type="NCBI Taxonomy" id="3702"/>
    <lineage>
        <taxon>Eukaryota</taxon>
        <taxon>Viridiplantae</taxon>
        <taxon>Streptophyta</taxon>
        <taxon>Embryophyta</taxon>
        <taxon>Tracheophyta</taxon>
        <taxon>Spermatophyta</taxon>
        <taxon>Magnoliopsida</taxon>
        <taxon>eudicotyledons</taxon>
        <taxon>Gunneridae</taxon>
        <taxon>Pentapetalae</taxon>
        <taxon>rosids</taxon>
        <taxon>malvids</taxon>
        <taxon>Brassicales</taxon>
        <taxon>Brassicaceae</taxon>
        <taxon>Camelineae</taxon>
        <taxon>Arabidopsis</taxon>
    </lineage>
</organism>
<proteinExistence type="evidence at protein level"/>